<organism>
    <name type="scientific">Oncorhynchus mykiss</name>
    <name type="common">Rainbow trout</name>
    <name type="synonym">Salmo gairdneri</name>
    <dbReference type="NCBI Taxonomy" id="8022"/>
    <lineage>
        <taxon>Eukaryota</taxon>
        <taxon>Metazoa</taxon>
        <taxon>Chordata</taxon>
        <taxon>Craniata</taxon>
        <taxon>Vertebrata</taxon>
        <taxon>Euteleostomi</taxon>
        <taxon>Actinopterygii</taxon>
        <taxon>Neopterygii</taxon>
        <taxon>Teleostei</taxon>
        <taxon>Protacanthopterygii</taxon>
        <taxon>Salmoniformes</taxon>
        <taxon>Salmonidae</taxon>
        <taxon>Salmoninae</taxon>
        <taxon>Oncorhynchus</taxon>
    </lineage>
</organism>
<keyword id="KW-0044">Antibiotic</keyword>
<keyword id="KW-0929">Antimicrobial</keyword>
<keyword id="KW-0903">Direct protein sequencing</keyword>
<keyword id="KW-0964">Secreted</keyword>
<reference key="1">
    <citation type="submission" date="1999-12" db="UniProtKB">
        <title>Purification and partial characterization of antibacterial peptides from rainbow trout, Oncorhynchus mykiss.</title>
        <authorList>
            <person name="Henry M.A."/>
            <person name="Secombes C.J."/>
        </authorList>
    </citation>
    <scope>PROTEIN SEQUENCE</scope>
    <scope>FUNCTION</scope>
    <source>
        <tissue>Serum</tissue>
    </source>
</reference>
<dbReference type="Proteomes" id="UP000694395">
    <property type="component" value="Unplaced"/>
</dbReference>
<dbReference type="GO" id="GO:0005576">
    <property type="term" value="C:extracellular region"/>
    <property type="evidence" value="ECO:0007669"/>
    <property type="project" value="UniProtKB-SubCell"/>
</dbReference>
<dbReference type="GO" id="GO:0042742">
    <property type="term" value="P:defense response to bacterium"/>
    <property type="evidence" value="ECO:0007669"/>
    <property type="project" value="UniProtKB-KW"/>
</dbReference>
<evidence type="ECO:0000269" key="1">
    <source ref="1"/>
</evidence>
<name>SAL3_ONCMY</name>
<accession>P82240</accession>
<feature type="peptide" id="PRO_0000045111" description="Salmocidin-3">
    <location>
        <begin position="1"/>
        <end position="16" status="greater than"/>
    </location>
</feature>
<feature type="sequence variant">
    <original>G</original>
    <variation>E</variation>
    <location>
        <position position="7"/>
    </location>
</feature>
<feature type="sequence variant">
    <original>D</original>
    <variation>M</variation>
    <location>
        <position position="15"/>
    </location>
</feature>
<feature type="non-terminal residue">
    <location>
        <position position="16"/>
    </location>
</feature>
<comment type="function">
    <text evidence="1">Antibacterial activity against Gram-negative bacteria.</text>
</comment>
<comment type="subcellular location">
    <subcellularLocation>
        <location>Secreted</location>
    </subcellularLocation>
</comment>
<comment type="tissue specificity">
    <text>Plasma serum.</text>
</comment>
<sequence length="16" mass="1748">XXPQQLGHVKAAXSDY</sequence>
<proteinExistence type="evidence at protein level"/>
<protein>
    <recommendedName>
        <fullName>Salmocidin-3</fullName>
    </recommendedName>
</protein>